<protein>
    <recommendedName>
        <fullName>Mast cell degranulating peptide</fullName>
        <shortName>MCD peptide</shortName>
        <shortName>MCDP</shortName>
    </recommendedName>
    <alternativeName>
        <fullName>Peptide 401</fullName>
    </alternativeName>
</protein>
<organism>
    <name type="scientific">Apis mellifera</name>
    <name type="common">Honeybee</name>
    <dbReference type="NCBI Taxonomy" id="7460"/>
    <lineage>
        <taxon>Eukaryota</taxon>
        <taxon>Metazoa</taxon>
        <taxon>Ecdysozoa</taxon>
        <taxon>Arthropoda</taxon>
        <taxon>Hexapoda</taxon>
        <taxon>Insecta</taxon>
        <taxon>Pterygota</taxon>
        <taxon>Neoptera</taxon>
        <taxon>Endopterygota</taxon>
        <taxon>Hymenoptera</taxon>
        <taxon>Apocrita</taxon>
        <taxon>Aculeata</taxon>
        <taxon>Apoidea</taxon>
        <taxon>Anthophila</taxon>
        <taxon>Apidae</taxon>
        <taxon>Apis</taxon>
    </lineage>
</organism>
<feature type="signal peptide" evidence="2">
    <location>
        <begin position="1"/>
        <end position="27"/>
    </location>
</feature>
<feature type="peptide" id="PRO_0000018613" description="Mast cell degranulating peptide" evidence="2">
    <location>
        <begin position="28"/>
        <end position="49"/>
    </location>
</feature>
<feature type="modified residue" description="N6-formyllysine; partial" evidence="4">
    <location>
        <position position="29"/>
    </location>
</feature>
<feature type="modified residue" description="N6-formyllysine; partial" evidence="4">
    <location>
        <position position="44"/>
    </location>
</feature>
<feature type="modified residue" description="N6-formyllysine; partial" evidence="4">
    <location>
        <position position="48"/>
    </location>
</feature>
<feature type="modified residue" description="Asparagine amide" evidence="3">
    <location>
        <position position="49"/>
    </location>
</feature>
<feature type="disulfide bond" evidence="1">
    <location>
        <begin position="30"/>
        <end position="42"/>
    </location>
</feature>
<feature type="disulfide bond" evidence="1">
    <location>
        <begin position="32"/>
        <end position="46"/>
    </location>
</feature>
<keyword id="KW-0027">Amidation</keyword>
<keyword id="KW-0903">Direct protein sequencing</keyword>
<keyword id="KW-1015">Disulfide bond</keyword>
<keyword id="KW-0291">Formylation</keyword>
<keyword id="KW-0872">Ion channel impairing toxin</keyword>
<keyword id="KW-0467">Mast cell degranulation</keyword>
<keyword id="KW-0528">Neurotoxin</keyword>
<keyword id="KW-0632">Potassium channel impairing toxin</keyword>
<keyword id="KW-1185">Reference proteome</keyword>
<keyword id="KW-0964">Secreted</keyword>
<keyword id="KW-0732">Signal</keyword>
<keyword id="KW-0800">Toxin</keyword>
<reference key="1">
    <citation type="journal article" date="1995" name="J. Biol. Chem.">
        <title>The precursors of the bee venom constituents apamin and MCD peptide are encoded by two genes in tandem which share the same 3'-exon.</title>
        <authorList>
            <person name="Gmachl M."/>
            <person name="Kreil G."/>
        </authorList>
    </citation>
    <scope>NUCLEOTIDE SEQUENCE [MRNA]</scope>
    <scope>AMIDATION AT ASN-49</scope>
    <source>
        <tissue>Venom gland</tissue>
    </source>
</reference>
<reference key="2">
    <citation type="journal article" date="1969" name="Hoppe-Seyler's Z. Physiol. Chem.">
        <title>Amino acid sequence of MCD-peptide, a specific mast cell-degranulating peptide from bee venom.</title>
        <authorList>
            <person name="Haux P."/>
        </authorList>
    </citation>
    <scope>PROTEIN SEQUENCE OF 28-49</scope>
    <source>
        <tissue>Venom</tissue>
    </source>
</reference>
<reference key="3">
    <citation type="journal article" date="1978" name="J. Chem. Soc. Perkin Trans. I">
        <title>Identification by mass spectrometry of N(epsilon)-formyl-lysine.</title>
        <authorList>
            <person name="Doonan S."/>
            <person name="Garman A.J."/>
            <person name="Hanson J.M."/>
            <person name="Loudon A.G."/>
            <person name="Vernon C.A."/>
        </authorList>
    </citation>
    <scope>PARTIAL PROTEIN SEQUENCE</scope>
    <scope>FORMYLATION AT LYS-29; LYS-44 AND LYS-48</scope>
    <scope>IDENTIFICATION BY MASS SPECTROMETRY</scope>
</reference>
<reference key="4">
    <citation type="journal article" date="1973" name="Nature">
        <title>An anti-inflammatory peptide from bee venom.</title>
        <authorList>
            <person name="Billingham M.E.J."/>
            <person name="Morley J."/>
            <person name="Hanson J.M."/>
            <person name="Shipolini R.A."/>
            <person name="Vernon C.A."/>
        </authorList>
    </citation>
    <scope>DISULFIDE BONDS</scope>
</reference>
<reference key="5">
    <citation type="journal article" date="1990" name="J. Pharm. Pharmacol.">
        <title>Mast cell degranulating peptide: a multi-functional neurotoxin.</title>
        <authorList>
            <person name="Ziai M.R."/>
            <person name="Russek S."/>
            <person name="Wang H.-C."/>
            <person name="Beer B."/>
            <person name="Blume A.J."/>
        </authorList>
    </citation>
    <scope>REVIEW</scope>
</reference>
<evidence type="ECO:0000269" key="1">
    <source>
    </source>
</evidence>
<evidence type="ECO:0000269" key="2">
    <source>
    </source>
</evidence>
<evidence type="ECO:0000269" key="3">
    <source>
    </source>
</evidence>
<evidence type="ECO:0000269" key="4">
    <source ref="3"/>
</evidence>
<sequence length="50" mass="5781">MISMLRCTFFFLSVILITSYFVTPTMSIKCNCKRHVIKPHICRKICGKNG</sequence>
<accession>P01499</accession>
<name>MCDP_APIME</name>
<dbReference type="EMBL" id="S78459">
    <property type="protein sequence ID" value="AAB34403.1"/>
    <property type="molecule type" value="mRNA"/>
</dbReference>
<dbReference type="PIR" id="B56710">
    <property type="entry name" value="MDHB"/>
</dbReference>
<dbReference type="RefSeq" id="NP_001011611.2">
    <property type="nucleotide sequence ID" value="NM_001011611.2"/>
</dbReference>
<dbReference type="STRING" id="7460.P01499"/>
<dbReference type="PaxDb" id="7460-GB40696-PA"/>
<dbReference type="GeneID" id="406134"/>
<dbReference type="KEGG" id="ame:406134"/>
<dbReference type="CTD" id="406134"/>
<dbReference type="InParanoid" id="P01499"/>
<dbReference type="Proteomes" id="UP000005203">
    <property type="component" value="Linkage group LG12"/>
</dbReference>
<dbReference type="GO" id="GO:0005576">
    <property type="term" value="C:extracellular region"/>
    <property type="evidence" value="ECO:0007669"/>
    <property type="project" value="UniProtKB-SubCell"/>
</dbReference>
<dbReference type="GO" id="GO:0015459">
    <property type="term" value="F:potassium channel regulator activity"/>
    <property type="evidence" value="ECO:0007669"/>
    <property type="project" value="UniProtKB-KW"/>
</dbReference>
<dbReference type="GO" id="GO:0090729">
    <property type="term" value="F:toxin activity"/>
    <property type="evidence" value="ECO:0007669"/>
    <property type="project" value="UniProtKB-KW"/>
</dbReference>
<dbReference type="InterPro" id="IPR035361">
    <property type="entry name" value="Bee_toxin"/>
</dbReference>
<dbReference type="Pfam" id="PF17454">
    <property type="entry name" value="Bee_toxin"/>
    <property type="match status" value="1"/>
</dbReference>
<proteinExistence type="evidence at protein level"/>
<comment type="function">
    <text>Potent anti-inflammatory agent. At low concentrations, mediates the degranulation of mast cells thus evoking an inflammatory response. Also acts as a neurotoxin capable of blocking a class of voltage-gated potassium channels.</text>
</comment>
<comment type="subcellular location">
    <subcellularLocation>
        <location>Secreted</location>
    </subcellularLocation>
</comment>
<comment type="tissue specificity">
    <text>Expressed by the venom gland.</text>
</comment>